<keyword id="KW-0007">Acetylation</keyword>
<keyword id="KW-0024">Alternative initiation</keyword>
<keyword id="KW-0025">Alternative splicing</keyword>
<keyword id="KW-1166">Caveolin-mediated endocytosis of virus by host</keyword>
<keyword id="KW-1170">Fusion of virus membrane with host endosomal membrane</keyword>
<keyword id="KW-1168">Fusion of virus membrane with host membrane</keyword>
<keyword id="KW-0325">Glycoprotein</keyword>
<keyword id="KW-0945">Host-virus interaction</keyword>
<keyword id="KW-0449">Lipoprotein</keyword>
<keyword id="KW-0472">Membrane</keyword>
<keyword id="KW-0519">Myristate</keyword>
<keyword id="KW-0812">Transmembrane</keyword>
<keyword id="KW-1133">Transmembrane helix</keyword>
<keyword id="KW-1161">Viral attachment to host cell</keyword>
<keyword id="KW-0261">Viral envelope protein</keyword>
<keyword id="KW-1162">Viral penetration into host cytoplasm</keyword>
<keyword id="KW-0946">Virion</keyword>
<keyword id="KW-1164">Virus endocytosis by host</keyword>
<keyword id="KW-1160">Virus entry into host cell</keyword>
<comment type="function">
    <text evidence="3">The large envelope protein exists in two topological conformations, one which is termed 'external' or Le-HBsAg and the other 'internal' or Li-HBsAg. In its external conformation the protein attaches the virus to cell receptors and thereby initiating infection. This interaction determines the species specificity and liver tropism. This attachment induces virion internalization predominantly through caveolin-mediated endocytosis. The large envelope protein also assures fusion between virion membrane and endosomal membrane. In its internal conformation the protein plays a role in virion morphogenesis and mediates the contact with the nucleocapsid like a matrix protein.</text>
</comment>
<comment type="function">
    <text evidence="3">The middle envelope protein plays an important role in the budding of the virion. It is involved in the induction of budding in a nucleocapsid independent way. In this process the majority of envelope proteins bud to form subviral lipoprotein particles of 22 nm of diameter that do not contain a nucleocapsid.</text>
</comment>
<comment type="subunit">
    <molecule>Isoform L</molecule>
    <text evidence="2">In its internal form (Li-HBsAg), interacts with the capsid protein and with the isoform S. Interacts with host chaperone CANX.</text>
</comment>
<comment type="subunit">
    <molecule>Isoform M</molecule>
    <text evidence="2">Associates with host chaperone CANX through its pre-S2 N glycan; this association may be essential for isoform M proper secretion.</text>
</comment>
<comment type="subunit">
    <molecule>Isoform S</molecule>
    <text evidence="2">Interacts with isoform L. Interacts with the antigens of satellite virus HDV (HDVAgs); this interaction is required for encapsidation of HDV genomic RNA.</text>
</comment>
<comment type="subcellular location">
    <subcellularLocation>
        <location evidence="3">Virion membrane</location>
    </subcellularLocation>
</comment>
<comment type="alternative products">
    <event type="alternative splicing"/>
    <event type="alternative initiation"/>
    <isoform>
        <id>O91534-1</id>
        <name>L</name>
        <name>Large envelope protein</name>
        <name>LHB</name>
        <name>L-HBsAg</name>
        <sequence type="displayed"/>
    </isoform>
    <isoform>
        <id>O91534-2</id>
        <name>M</name>
        <name>Middle envelope protein</name>
        <name>MHB</name>
        <name>M-HBsAg</name>
        <sequence type="described" ref="VSP_031363"/>
    </isoform>
    <isoform>
        <id>O91534-3</id>
        <name>S</name>
        <name>Small envelope protein</name>
        <name>SHB</name>
        <name>S-HBsAg</name>
        <sequence type="described" ref="VSP_031362"/>
    </isoform>
</comment>
<comment type="domain">
    <text evidence="3">The large envelope protein is synthesized with the pre-S region at the cytosolic side of the endoplasmic reticulum and, hence will be within the virion after budding. Therefore the pre-S region is not N-glycosylated. Later a post-translational translocation of N-terminal pre-S and TM1 domains occur in about 50% of proteins at the virion surface. These molecules change their topology by an unknown mechanism, resulting in exposure of pre-S region at virion surface. For isoform M in contrast, the pre-S2 region is translocated cotranslationally to the endoplasmic reticulum lumen and is N-glycosylated.</text>
</comment>
<comment type="PTM">
    <text evidence="1 3">Isoform M is N-terminally acetylated by host at a ratio of 90%, and N-glycosylated by host at the pre-S2 region.</text>
</comment>
<comment type="PTM">
    <text evidence="3">Myristoylated.</text>
</comment>
<comment type="biotechnology">
    <text>Systematic vaccination of individuals at risk of exposure to the virus has been the main method of controlling the morbidity and mortality associated with hepatitis B. The first hepatitis B vaccine was manufactured by the purification and inactivation of HBsAg obtained from the plasma of chronic hepatitis B virus carriers. The vaccine is now produced by recombinant DNA techniques and expression of the S isoform in yeast cells. The pre-S region do not seem to induce strong enough antigenic response.</text>
</comment>
<comment type="similarity">
    <text evidence="3">Belongs to the orthohepadnavirus major surface antigen family.</text>
</comment>
<organismHost>
    <name type="scientific">Homo sapiens</name>
    <name type="common">Human</name>
    <dbReference type="NCBI Taxonomy" id="9606"/>
</organismHost>
<organismHost>
    <name type="scientific">Pan troglodytes</name>
    <name type="common">Chimpanzee</name>
    <dbReference type="NCBI Taxonomy" id="9598"/>
</organismHost>
<reference key="1">
    <citation type="journal article" date="1998" name="Arch. Virol.">
        <title>Hepatitis B virus genomic sequence in the circulation of hepatocellular carcinoma patients: comparative analysis of 40 full-length isolates.</title>
        <authorList>
            <person name="Takahashi K."/>
            <person name="Akahane Y."/>
            <person name="Hino K."/>
            <person name="Ohta Y."/>
            <person name="Mishiro S."/>
        </authorList>
    </citation>
    <scope>NUCLEOTIDE SEQUENCE [GENOMIC DNA]</scope>
</reference>
<reference key="2">
    <citation type="journal article" date="1996" name="Intervirology">
        <title>Functions of the large hepatitis B virus surface protein in viral particle morphogenesis.</title>
        <authorList>
            <person name="Bruss V."/>
            <person name="Gerhardt E."/>
            <person name="Vieluf K."/>
            <person name="Wunderlich G."/>
        </authorList>
    </citation>
    <scope>REVIEW</scope>
</reference>
<reference key="3">
    <citation type="journal article" date="1998" name="Adv. Exp. Med. Biol.">
        <title>Role of glycan processing in hepatitis B virus envelope protein trafficking.</title>
        <authorList>
            <person name="Block T.M."/>
            <person name="Lu X."/>
            <person name="Mehta A."/>
            <person name="Park J."/>
            <person name="Blumberg B.S."/>
            <person name="Dwek R."/>
        </authorList>
    </citation>
    <scope>REVIEW</scope>
</reference>
<reference key="4">
    <citation type="journal article" date="2004" name="Virus Res.">
        <title>Envelopment of the hepatitis B virus nucleocapsid.</title>
        <authorList>
            <person name="Bruss V."/>
        </authorList>
    </citation>
    <scope>REVIEW</scope>
</reference>
<reference key="5">
    <citation type="journal article" date="2006" name="Cancer Sci.">
        <title>Hepatitis B virus pre-S mutants, endoplasmic reticulum stress and hepatocarcinogenesis.</title>
        <authorList>
            <person name="Wang H.C."/>
            <person name="Huang W."/>
            <person name="Lai M.D."/>
            <person name="Su I.J."/>
        </authorList>
    </citation>
    <scope>REVIEW</scope>
</reference>
<organism>
    <name type="scientific">Hepatitis B virus genotype A2 (isolate Japan/11D11HCCW/1998)</name>
    <name type="common">HBV-A</name>
    <dbReference type="NCBI Taxonomy" id="489457"/>
    <lineage>
        <taxon>Viruses</taxon>
        <taxon>Riboviria</taxon>
        <taxon>Pararnavirae</taxon>
        <taxon>Artverviricota</taxon>
        <taxon>Revtraviricetes</taxon>
        <taxon>Blubervirales</taxon>
        <taxon>Hepadnaviridae</taxon>
        <taxon>Orthohepadnavirus</taxon>
        <taxon>Hepatitis B virus</taxon>
    </lineage>
</organism>
<protein>
    <recommendedName>
        <fullName evidence="3">Large envelope protein</fullName>
    </recommendedName>
    <alternativeName>
        <fullName evidence="3">L glycoprotein</fullName>
    </alternativeName>
    <alternativeName>
        <fullName evidence="3">L-HBsAg</fullName>
        <shortName evidence="3">LHB</shortName>
    </alternativeName>
    <alternativeName>
        <fullName evidence="3">Large S protein</fullName>
    </alternativeName>
    <alternativeName>
        <fullName evidence="3">Large surface protein</fullName>
    </alternativeName>
    <alternativeName>
        <fullName evidence="3">Major surface antigen</fullName>
    </alternativeName>
</protein>
<sequence>MGGWSSKPRKGMGTNLSVPNPLGFFPDHQLDPAFGANSNNPDWDFNPIKDHWPAANQVGVGAFGPGFTPPHGGILGWSPQAQGILTTVSTIPPPASTNRQSGRQPTPISPPLRDSHPQAMQWNSTAFHQTLQDPRVRGLYLPAGGSSSGTVNPAPNIASHISSISARTGDPVTNMENITSGFLGPLLVLQAGFFLLTRILTIPQSLDSWWTSLNFLGGSPVCLGQNSQSPTSNHSPTSCPPICPGYRWMCLRRFIIFLFILLLCLIFLLVLLDYQGMLPVCPLIPGSTTTSTGPCKTCTTPAQGNSMFPSCCCTKPTDGNCTCIPIPSSWAFAKFLWEWASVRFSWLSLLVPFVQWFVGLSPTVWLSAIWMMWYWGPSLYSIVRPFIPLLPIFFCLWVYI</sequence>
<gene>
    <name evidence="3" type="primary">S</name>
</gene>
<evidence type="ECO:0000250" key="1">
    <source>
        <dbReference type="UniProtKB" id="P03138"/>
    </source>
</evidence>
<evidence type="ECO:0000250" key="2">
    <source>
        <dbReference type="UniProtKB" id="P03141"/>
    </source>
</evidence>
<evidence type="ECO:0000255" key="3">
    <source>
        <dbReference type="HAMAP-Rule" id="MF_04075"/>
    </source>
</evidence>
<evidence type="ECO:0000256" key="4">
    <source>
        <dbReference type="SAM" id="MobiDB-lite"/>
    </source>
</evidence>
<evidence type="ECO:0000305" key="5"/>
<name>HBSAG_HBVA7</name>
<feature type="initiator methionine" description="Removed; by host" evidence="3">
    <location>
        <position position="1"/>
    </location>
</feature>
<feature type="chain" id="PRO_0000319072" description="Large envelope protein" evidence="3">
    <location>
        <begin position="2"/>
        <end position="400"/>
    </location>
</feature>
<feature type="topological domain" description="Intravirion; in internal conformation" evidence="3">
    <location>
        <begin position="2"/>
        <end position="253"/>
    </location>
</feature>
<feature type="topological domain" description="Virion surface; in external conformation" evidence="3">
    <location>
        <begin position="2"/>
        <end position="181"/>
    </location>
</feature>
<feature type="transmembrane region" description="Helical; Name=TM1; Note=In external conformation" evidence="3">
    <location>
        <begin position="182"/>
        <end position="202"/>
    </location>
</feature>
<feature type="topological domain" description="Intravirion; in external conformation" evidence="3">
    <location>
        <begin position="203"/>
        <end position="253"/>
    </location>
</feature>
<feature type="transmembrane region" description="Helical; Name=TM2" evidence="3">
    <location>
        <begin position="254"/>
        <end position="274"/>
    </location>
</feature>
<feature type="topological domain" description="Virion surface" evidence="3">
    <location>
        <begin position="275"/>
        <end position="348"/>
    </location>
</feature>
<feature type="transmembrane region" description="Helical" evidence="3">
    <location>
        <begin position="349"/>
        <end position="369"/>
    </location>
</feature>
<feature type="topological domain" description="Intravirion" evidence="3">
    <location>
        <begin position="370"/>
        <end position="375"/>
    </location>
</feature>
<feature type="transmembrane region" description="Helical; Name=TM3" evidence="3">
    <location>
        <begin position="376"/>
        <end position="398"/>
    </location>
</feature>
<feature type="topological domain" description="Virion surface" evidence="3">
    <location>
        <begin position="399"/>
        <end position="400"/>
    </location>
</feature>
<feature type="region of interest" description="Disordered" evidence="4">
    <location>
        <begin position="1"/>
        <end position="20"/>
    </location>
</feature>
<feature type="region of interest" description="Pre-S" evidence="3">
    <location>
        <begin position="2"/>
        <end position="174"/>
    </location>
</feature>
<feature type="region of interest" description="Pre-S1" evidence="3">
    <location>
        <begin position="2"/>
        <end position="119"/>
    </location>
</feature>
<feature type="region of interest" description="Disordered" evidence="4">
    <location>
        <begin position="88"/>
        <end position="115"/>
    </location>
</feature>
<feature type="region of interest" description="Pre-S2" evidence="3">
    <location>
        <begin position="120"/>
        <end position="174"/>
    </location>
</feature>
<feature type="compositionally biased region" description="Polar residues" evidence="4">
    <location>
        <begin position="88"/>
        <end position="106"/>
    </location>
</feature>
<feature type="lipid moiety-binding region" description="N-myristoyl glycine; by host" evidence="3">
    <location>
        <position position="2"/>
    </location>
</feature>
<feature type="glycosylation site" description="N-linked (GlcNAc...) asparagine; by host" evidence="3">
    <location>
        <position position="320"/>
    </location>
</feature>
<feature type="splice variant" id="VSP_031362" description="In isoform S." evidence="5">
    <location>
        <begin position="1"/>
        <end position="174"/>
    </location>
</feature>
<feature type="splice variant" id="VSP_031363" description="In isoform M." evidence="5">
    <location>
        <begin position="1"/>
        <end position="119"/>
    </location>
</feature>
<feature type="modified residue" description="N-acetylmethionine" evidence="5">
    <location sequence="O91534-2">
        <position position="1"/>
    </location>
</feature>
<feature type="glycosylation site" description="N-linked (GlcNAc...) asparagine" evidence="5">
    <location sequence="O91534-2">
        <position position="4"/>
    </location>
</feature>
<accession>O91534</accession>
<proteinExistence type="evidence at protein level"/>
<dbReference type="EMBL" id="AB014370">
    <property type="protein sequence ID" value="BAA32872.1"/>
    <property type="molecule type" value="Genomic_DNA"/>
</dbReference>
<dbReference type="PIR" id="JQ2045">
    <property type="entry name" value="JQ2045"/>
</dbReference>
<dbReference type="PIR" id="JQ2046">
    <property type="entry name" value="JQ2046"/>
</dbReference>
<dbReference type="PIR" id="JQ2047">
    <property type="entry name" value="JQ2047"/>
</dbReference>
<dbReference type="PIR" id="JQ2048">
    <property type="entry name" value="JQ2048"/>
</dbReference>
<dbReference type="PIR" id="JQ2050">
    <property type="entry name" value="JQ2050"/>
</dbReference>
<dbReference type="PIR" id="JQ2051">
    <property type="entry name" value="JQ2051"/>
</dbReference>
<dbReference type="PIR" id="JQ2053">
    <property type="entry name" value="JQ2053"/>
</dbReference>
<dbReference type="PIR" id="JQ2054">
    <property type="entry name" value="JQ2054"/>
</dbReference>
<dbReference type="SMR" id="O91534"/>
<dbReference type="GlyCosmos" id="O91534">
    <property type="glycosylation" value="2 sites, No reported glycans"/>
</dbReference>
<dbReference type="Proteomes" id="UP000007910">
    <property type="component" value="Genome"/>
</dbReference>
<dbReference type="GO" id="GO:0016020">
    <property type="term" value="C:membrane"/>
    <property type="evidence" value="ECO:0007669"/>
    <property type="project" value="UniProtKB-UniRule"/>
</dbReference>
<dbReference type="GO" id="GO:0019031">
    <property type="term" value="C:viral envelope"/>
    <property type="evidence" value="ECO:0007669"/>
    <property type="project" value="UniProtKB-KW"/>
</dbReference>
<dbReference type="GO" id="GO:0055036">
    <property type="term" value="C:virion membrane"/>
    <property type="evidence" value="ECO:0007669"/>
    <property type="project" value="UniProtKB-SubCell"/>
</dbReference>
<dbReference type="GO" id="GO:0075513">
    <property type="term" value="P:caveolin-mediated endocytosis of virus by host cell"/>
    <property type="evidence" value="ECO:0007669"/>
    <property type="project" value="UniProtKB-KW"/>
</dbReference>
<dbReference type="GO" id="GO:0039654">
    <property type="term" value="P:fusion of virus membrane with host endosome membrane"/>
    <property type="evidence" value="ECO:0007669"/>
    <property type="project" value="UniProtKB-KW"/>
</dbReference>
<dbReference type="GO" id="GO:0019062">
    <property type="term" value="P:virion attachment to host cell"/>
    <property type="evidence" value="ECO:0007669"/>
    <property type="project" value="UniProtKB-UniRule"/>
</dbReference>
<dbReference type="HAMAP" id="MF_04075">
    <property type="entry name" value="HBV_HBSAG"/>
    <property type="match status" value="1"/>
</dbReference>
<dbReference type="InterPro" id="IPR000349">
    <property type="entry name" value="HBV_HBSAG"/>
</dbReference>
<dbReference type="Pfam" id="PF00695">
    <property type="entry name" value="vMSA"/>
    <property type="match status" value="1"/>
</dbReference>